<sequence>MNQMLFVTKRNGKIELINLDKIHRVLNWAAKGLENISISQVALKSRIQFYNNIKTTIIHETIIKAAADLISENSPDYQYMAARLTIFHLRKKAFGQFNPPNLYDHVKNMIKLEKYDQHLLNDYPKQDFLIMNSFIKHRRDMNFSYAAVKQLEGKYLIQNRVTKKIYESAQFLYILISACLFSKYPNETRMKYIKNFYDAISTFKISLPTPIMAGLRTPTRQFSSCVLIESEDNLNSINATTSAIVKYVSQRAGIGINAGRIRALGSPIRNGDTLHTGCIPFYKHFQSAVKSCSQGGVRGGAATIFYPIWHFEIESLLVLKNNRGIEENRVRHMDYSVQLNKLMYQRLILGEHITLFSPSDVPNLYDSFFNNQEKFERLYIKYENDKTIRKKKVKASYLFSLMMQERTSTGRIYIQNVDHCNSHSAFNPKIAPIRQSNLCLEITLPTKALQDVHDKNGEISLCTLSAINLGSLNNLNDLSKLSNLIVRALDSVLDYQEYPILSAKKSALSRRTLGIGVINFAYYLAKNGVRYSDGSANNLTHRTFEAIQYHLLNASCVLAQEKGACHWFSHTNYYKGILPIDTYKKNVDEICNEPLHLDWELLRKKIKKYGLRNSTLSALMPSETSSQISNATNGIEPPRGLISIKASKDGMLRQVVPEYKRLKNNYELLWNIPNNTGYLQLASIMQKFVDQSISANTNYDPKLFPNNKIPMQQLILDLLTAYKLGLKTLYYQNTRDGASDHQTEDIQFSKNENCNHGACKI</sequence>
<protein>
    <recommendedName>
        <fullName>Ribonucleoside-diphosphate reductase subunit alpha</fullName>
        <ecNumber>1.17.4.1</ecNumber>
    </recommendedName>
    <alternativeName>
        <fullName>Ribonucleotide reductase</fullName>
    </alternativeName>
</protein>
<accession>Q89AS4</accession>
<name>RIR1_BUCBP</name>
<evidence type="ECO:0000250" key="1"/>
<evidence type="ECO:0000250" key="2">
    <source>
        <dbReference type="UniProtKB" id="P00452"/>
    </source>
</evidence>
<evidence type="ECO:0000255" key="3">
    <source>
        <dbReference type="PROSITE-ProRule" id="PRU00492"/>
    </source>
</evidence>
<evidence type="ECO:0000305" key="4"/>
<organism>
    <name type="scientific">Buchnera aphidicola subsp. Baizongia pistaciae (strain Bp)</name>
    <dbReference type="NCBI Taxonomy" id="224915"/>
    <lineage>
        <taxon>Bacteria</taxon>
        <taxon>Pseudomonadati</taxon>
        <taxon>Pseudomonadota</taxon>
        <taxon>Gammaproteobacteria</taxon>
        <taxon>Enterobacterales</taxon>
        <taxon>Erwiniaceae</taxon>
        <taxon>Buchnera</taxon>
    </lineage>
</organism>
<feature type="chain" id="PRO_0000187208" description="Ribonucleoside-diphosphate reductase subunit alpha">
    <location>
        <begin position="1"/>
        <end position="761"/>
    </location>
</feature>
<feature type="domain" description="ATP-cone" evidence="3">
    <location>
        <begin position="5"/>
        <end position="95"/>
    </location>
</feature>
<feature type="active site" description="Proton acceptor" evidence="1">
    <location>
        <position position="437"/>
    </location>
</feature>
<feature type="active site" description="Cysteine radical intermediate" evidence="1">
    <location>
        <position position="439"/>
    </location>
</feature>
<feature type="active site" description="Proton acceptor" evidence="1">
    <location>
        <position position="441"/>
    </location>
</feature>
<feature type="binding site" evidence="2">
    <location>
        <position position="9"/>
    </location>
    <ligand>
        <name>ATP</name>
        <dbReference type="ChEBI" id="CHEBI:30616"/>
        <note>allosteric activator</note>
    </ligand>
</feature>
<feature type="binding site" evidence="2">
    <location>
        <begin position="15"/>
        <end position="21"/>
    </location>
    <ligand>
        <name>ATP</name>
        <dbReference type="ChEBI" id="CHEBI:30616"/>
        <note>allosteric activator</note>
    </ligand>
</feature>
<feature type="binding site" evidence="2">
    <location>
        <position position="55"/>
    </location>
    <ligand>
        <name>ATP</name>
        <dbReference type="ChEBI" id="CHEBI:30616"/>
        <note>allosteric activator</note>
    </ligand>
</feature>
<feature type="binding site" evidence="2">
    <location>
        <position position="91"/>
    </location>
    <ligand>
        <name>ATP</name>
        <dbReference type="ChEBI" id="CHEBI:30616"/>
        <note>allosteric activator</note>
    </ligand>
</feature>
<feature type="binding site" evidence="2">
    <location>
        <position position="209"/>
    </location>
    <ligand>
        <name>GDP</name>
        <dbReference type="ChEBI" id="CHEBI:58189"/>
    </ligand>
</feature>
<feature type="binding site" evidence="2">
    <location>
        <begin position="232"/>
        <end position="234"/>
    </location>
    <ligand>
        <name>dTTP</name>
        <dbReference type="ChEBI" id="CHEBI:37568"/>
        <note>allosteric effector that controls substrate specificity</note>
    </ligand>
</feature>
<feature type="binding site" evidence="2">
    <location>
        <position position="262"/>
    </location>
    <ligand>
        <name>dTTP</name>
        <dbReference type="ChEBI" id="CHEBI:37568"/>
        <note>allosteric effector that controls substrate specificity</note>
    </ligand>
</feature>
<feature type="binding site" evidence="2">
    <location>
        <position position="269"/>
    </location>
    <ligand>
        <name>dTTP</name>
        <dbReference type="ChEBI" id="CHEBI:37568"/>
        <note>allosteric effector that controls substrate specificity</note>
    </ligand>
</feature>
<feature type="binding site" evidence="2">
    <location>
        <position position="437"/>
    </location>
    <ligand>
        <name>GDP</name>
        <dbReference type="ChEBI" id="CHEBI:58189"/>
    </ligand>
</feature>
<feature type="binding site" evidence="2">
    <location>
        <position position="441"/>
    </location>
    <ligand>
        <name>GDP</name>
        <dbReference type="ChEBI" id="CHEBI:58189"/>
    </ligand>
</feature>
<feature type="binding site" evidence="2">
    <location>
        <begin position="623"/>
        <end position="625"/>
    </location>
    <ligand>
        <name>GDP</name>
        <dbReference type="ChEBI" id="CHEBI:58189"/>
    </ligand>
</feature>
<feature type="site" description="Important for hydrogen atom transfer" evidence="1">
    <location>
        <position position="225"/>
    </location>
</feature>
<feature type="site" description="Important for hydrogen atom transfer" evidence="1">
    <location>
        <position position="462"/>
    </location>
</feature>
<feature type="site" description="Important for electron transfer" evidence="1">
    <location>
        <position position="730"/>
    </location>
</feature>
<feature type="site" description="Important for electron transfer" evidence="1">
    <location>
        <position position="731"/>
    </location>
</feature>
<feature type="site" description="Interacts with thioredoxin/glutaredoxin" evidence="1">
    <location>
        <position position="754"/>
    </location>
</feature>
<feature type="site" description="Interacts with thioredoxin/glutaredoxin" evidence="1">
    <location>
        <position position="759"/>
    </location>
</feature>
<feature type="disulfide bond" description="Redox-active" evidence="1">
    <location>
        <begin position="225"/>
        <end position="462"/>
    </location>
</feature>
<gene>
    <name type="primary">nrdA</name>
    <name type="ordered locus">bbp_168</name>
</gene>
<keyword id="KW-0021">Allosteric enzyme</keyword>
<keyword id="KW-0067">ATP-binding</keyword>
<keyword id="KW-0215">Deoxyribonucleotide synthesis</keyword>
<keyword id="KW-1015">Disulfide bond</keyword>
<keyword id="KW-0547">Nucleotide-binding</keyword>
<keyword id="KW-0560">Oxidoreductase</keyword>
<keyword id="KW-1185">Reference proteome</keyword>
<dbReference type="EC" id="1.17.4.1"/>
<dbReference type="EMBL" id="AE016826">
    <property type="protein sequence ID" value="AAO26901.1"/>
    <property type="molecule type" value="Genomic_DNA"/>
</dbReference>
<dbReference type="RefSeq" id="WP_011091302.1">
    <property type="nucleotide sequence ID" value="NC_004545.1"/>
</dbReference>
<dbReference type="SMR" id="Q89AS4"/>
<dbReference type="STRING" id="224915.bbp_168"/>
<dbReference type="KEGG" id="bab:bbp_168"/>
<dbReference type="eggNOG" id="COG0209">
    <property type="taxonomic scope" value="Bacteria"/>
</dbReference>
<dbReference type="HOGENOM" id="CLU_000404_3_0_6"/>
<dbReference type="OrthoDB" id="9762933at2"/>
<dbReference type="Proteomes" id="UP000000601">
    <property type="component" value="Chromosome"/>
</dbReference>
<dbReference type="GO" id="GO:0005971">
    <property type="term" value="C:ribonucleoside-diphosphate reductase complex"/>
    <property type="evidence" value="ECO:0007669"/>
    <property type="project" value="TreeGrafter"/>
</dbReference>
<dbReference type="GO" id="GO:0005524">
    <property type="term" value="F:ATP binding"/>
    <property type="evidence" value="ECO:0007669"/>
    <property type="project" value="UniProtKB-KW"/>
</dbReference>
<dbReference type="GO" id="GO:0004748">
    <property type="term" value="F:ribonucleoside-diphosphate reductase activity, thioredoxin disulfide as acceptor"/>
    <property type="evidence" value="ECO:0007669"/>
    <property type="project" value="UniProtKB-EC"/>
</dbReference>
<dbReference type="GO" id="GO:0009263">
    <property type="term" value="P:deoxyribonucleotide biosynthetic process"/>
    <property type="evidence" value="ECO:0007669"/>
    <property type="project" value="UniProtKB-KW"/>
</dbReference>
<dbReference type="FunFam" id="1.10.1650.20:FF:000001">
    <property type="entry name" value="Ribonucleoside-diphosphate reductase"/>
    <property type="match status" value="1"/>
</dbReference>
<dbReference type="Gene3D" id="1.10.1650.20">
    <property type="match status" value="1"/>
</dbReference>
<dbReference type="Gene3D" id="3.20.70.20">
    <property type="match status" value="1"/>
</dbReference>
<dbReference type="InterPro" id="IPR005144">
    <property type="entry name" value="ATP-cone_dom"/>
</dbReference>
<dbReference type="InterPro" id="IPR013346">
    <property type="entry name" value="NrdE_NrdA_C"/>
</dbReference>
<dbReference type="InterPro" id="IPR000788">
    <property type="entry name" value="RNR_lg_C"/>
</dbReference>
<dbReference type="InterPro" id="IPR013509">
    <property type="entry name" value="RNR_lsu_N"/>
</dbReference>
<dbReference type="InterPro" id="IPR008926">
    <property type="entry name" value="RNR_R1-su_N"/>
</dbReference>
<dbReference type="InterPro" id="IPR039718">
    <property type="entry name" value="Rrm1"/>
</dbReference>
<dbReference type="NCBIfam" id="TIGR02506">
    <property type="entry name" value="NrdE_NrdA"/>
    <property type="match status" value="1"/>
</dbReference>
<dbReference type="NCBIfam" id="NF006578">
    <property type="entry name" value="PRK09103.1"/>
    <property type="match status" value="1"/>
</dbReference>
<dbReference type="PANTHER" id="PTHR11573">
    <property type="entry name" value="RIBONUCLEOSIDE-DIPHOSPHATE REDUCTASE LARGE CHAIN"/>
    <property type="match status" value="1"/>
</dbReference>
<dbReference type="PANTHER" id="PTHR11573:SF6">
    <property type="entry name" value="RIBONUCLEOSIDE-DIPHOSPHATE REDUCTASE LARGE SUBUNIT"/>
    <property type="match status" value="1"/>
</dbReference>
<dbReference type="Pfam" id="PF03477">
    <property type="entry name" value="ATP-cone"/>
    <property type="match status" value="1"/>
</dbReference>
<dbReference type="Pfam" id="PF02867">
    <property type="entry name" value="Ribonuc_red_lgC"/>
    <property type="match status" value="1"/>
</dbReference>
<dbReference type="Pfam" id="PF00317">
    <property type="entry name" value="Ribonuc_red_lgN"/>
    <property type="match status" value="1"/>
</dbReference>
<dbReference type="PRINTS" id="PR01183">
    <property type="entry name" value="RIBORDTASEM1"/>
</dbReference>
<dbReference type="SUPFAM" id="SSF51998">
    <property type="entry name" value="PFL-like glycyl radical enzymes"/>
    <property type="match status" value="1"/>
</dbReference>
<dbReference type="SUPFAM" id="SSF48168">
    <property type="entry name" value="R1 subunit of ribonucleotide reductase, N-terminal domain"/>
    <property type="match status" value="1"/>
</dbReference>
<dbReference type="PROSITE" id="PS51161">
    <property type="entry name" value="ATP_CONE"/>
    <property type="match status" value="1"/>
</dbReference>
<dbReference type="PROSITE" id="PS00089">
    <property type="entry name" value="RIBORED_LARGE"/>
    <property type="match status" value="1"/>
</dbReference>
<proteinExistence type="inferred from homology"/>
<reference key="1">
    <citation type="journal article" date="2003" name="Proc. Natl. Acad. Sci. U.S.A.">
        <title>Reductive genome evolution in Buchnera aphidicola.</title>
        <authorList>
            <person name="van Ham R.C.H.J."/>
            <person name="Kamerbeek J."/>
            <person name="Palacios C."/>
            <person name="Rausell C."/>
            <person name="Abascal F."/>
            <person name="Bastolla U."/>
            <person name="Fernandez J.M."/>
            <person name="Jimenez L."/>
            <person name="Postigo M."/>
            <person name="Silva F.J."/>
            <person name="Tamames J."/>
            <person name="Viguera E."/>
            <person name="Latorre A."/>
            <person name="Valencia A."/>
            <person name="Moran F."/>
            <person name="Moya A."/>
        </authorList>
    </citation>
    <scope>NUCLEOTIDE SEQUENCE [LARGE SCALE GENOMIC DNA]</scope>
    <source>
        <strain>Bp</strain>
    </source>
</reference>
<comment type="function">
    <text evidence="1">Provides the precursors necessary for DNA synthesis. Catalyzes the biosynthesis of deoxyribonucleotides from the corresponding ribonucleotides (By similarity).</text>
</comment>
<comment type="catalytic activity">
    <reaction>
        <text>a 2'-deoxyribonucleoside 5'-diphosphate + [thioredoxin]-disulfide + H2O = a ribonucleoside 5'-diphosphate + [thioredoxin]-dithiol</text>
        <dbReference type="Rhea" id="RHEA:23252"/>
        <dbReference type="Rhea" id="RHEA-COMP:10698"/>
        <dbReference type="Rhea" id="RHEA-COMP:10700"/>
        <dbReference type="ChEBI" id="CHEBI:15377"/>
        <dbReference type="ChEBI" id="CHEBI:29950"/>
        <dbReference type="ChEBI" id="CHEBI:50058"/>
        <dbReference type="ChEBI" id="CHEBI:57930"/>
        <dbReference type="ChEBI" id="CHEBI:73316"/>
        <dbReference type="EC" id="1.17.4.1"/>
    </reaction>
</comment>
<comment type="activity regulation">
    <text evidence="1">Under complex allosteric control mediated by deoxynucleoside triphosphates and ATP binding to separate specificity and activation sites on the alpha subunit. The type of nucleotide bound at the specificity site determines substrate preference. It seems probable that ATP makes the enzyme reduce CDP and UDP, dGTP favors ADP reduction and dTTP favors GDP reduction. Stimulated by ATP and inhibited by dATP binding to the activity site (By similarity).</text>
</comment>
<comment type="subunit">
    <text evidence="1">Tetramer of two alpha and two beta subunits.</text>
</comment>
<comment type="similarity">
    <text evidence="4">Belongs to the ribonucleoside diphosphate reductase large chain family.</text>
</comment>